<gene>
    <name evidence="1" type="primary">metAS</name>
    <name type="ordered locus">Ping_0112</name>
</gene>
<comment type="function">
    <text evidence="1">Transfers a succinyl group from succinyl-CoA to L-homoserine, forming succinyl-L-homoserine.</text>
</comment>
<comment type="catalytic activity">
    <reaction evidence="1">
        <text>L-homoserine + succinyl-CoA = O-succinyl-L-homoserine + CoA</text>
        <dbReference type="Rhea" id="RHEA:22008"/>
        <dbReference type="ChEBI" id="CHEBI:57287"/>
        <dbReference type="ChEBI" id="CHEBI:57292"/>
        <dbReference type="ChEBI" id="CHEBI:57476"/>
        <dbReference type="ChEBI" id="CHEBI:57661"/>
        <dbReference type="EC" id="2.3.1.46"/>
    </reaction>
</comment>
<comment type="pathway">
    <text evidence="1">Amino-acid biosynthesis; L-methionine biosynthesis via de novo pathway; O-succinyl-L-homoserine from L-homoserine: step 1/1.</text>
</comment>
<comment type="subcellular location">
    <subcellularLocation>
        <location evidence="1">Cytoplasm</location>
    </subcellularLocation>
</comment>
<comment type="similarity">
    <text evidence="1">Belongs to the MetA family.</text>
</comment>
<proteinExistence type="inferred from homology"/>
<sequence>MPIRISDDLPAADILRSENIFTMSESRASLQNIRPLRVLILNLMPKKIETETQIMRLLSNTPLQVNVELIRVDARASRNTPKEHLDKFYSDFDRVKNQKWDGFVITGAPLGQLPFEDVYYWEKFVEIVEWSRHNVTSTLFLCWAAQAALTYLYGLKKETRGDKLSGIYLHRTHHHHHPLVRGFDDEFWAPLSRFAEFNSEVVSENSDLTIFADAPNAGIYLAASPDCRQVYVTGHPEYDASTLHNEYLRDLEEGLEPKQPVNYYPDNDQNKTPRAIWRSHGNLLYSNWLNYCVYQVTPYDLADLI</sequence>
<protein>
    <recommendedName>
        <fullName evidence="1">Homoserine O-succinyltransferase</fullName>
        <shortName evidence="1">HST</shortName>
        <ecNumber evidence="1">2.3.1.46</ecNumber>
    </recommendedName>
    <alternativeName>
        <fullName evidence="1">Homoserine transsuccinylase</fullName>
        <shortName evidence="1">HTS</shortName>
    </alternativeName>
</protein>
<dbReference type="EC" id="2.3.1.46" evidence="1"/>
<dbReference type="EMBL" id="CP000510">
    <property type="protein sequence ID" value="ABM01986.1"/>
    <property type="molecule type" value="Genomic_DNA"/>
</dbReference>
<dbReference type="RefSeq" id="WP_011768545.1">
    <property type="nucleotide sequence ID" value="NC_008709.1"/>
</dbReference>
<dbReference type="SMR" id="A1SR71"/>
<dbReference type="STRING" id="357804.Ping_0112"/>
<dbReference type="KEGG" id="pin:Ping_0112"/>
<dbReference type="eggNOG" id="COG1897">
    <property type="taxonomic scope" value="Bacteria"/>
</dbReference>
<dbReference type="HOGENOM" id="CLU_057851_0_1_6"/>
<dbReference type="OrthoDB" id="9772423at2"/>
<dbReference type="UniPathway" id="UPA00051">
    <property type="reaction ID" value="UER00075"/>
</dbReference>
<dbReference type="Proteomes" id="UP000000639">
    <property type="component" value="Chromosome"/>
</dbReference>
<dbReference type="GO" id="GO:0005737">
    <property type="term" value="C:cytoplasm"/>
    <property type="evidence" value="ECO:0007669"/>
    <property type="project" value="UniProtKB-SubCell"/>
</dbReference>
<dbReference type="GO" id="GO:0004414">
    <property type="term" value="F:homoserine O-acetyltransferase activity"/>
    <property type="evidence" value="ECO:0007669"/>
    <property type="project" value="UniProtKB-UniRule"/>
</dbReference>
<dbReference type="GO" id="GO:0008899">
    <property type="term" value="F:homoserine O-succinyltransferase activity"/>
    <property type="evidence" value="ECO:0007669"/>
    <property type="project" value="UniProtKB-EC"/>
</dbReference>
<dbReference type="GO" id="GO:0019281">
    <property type="term" value="P:L-methionine biosynthetic process from homoserine via O-succinyl-L-homoserine and cystathionine"/>
    <property type="evidence" value="ECO:0007669"/>
    <property type="project" value="InterPro"/>
</dbReference>
<dbReference type="CDD" id="cd03131">
    <property type="entry name" value="GATase1_HTS"/>
    <property type="match status" value="1"/>
</dbReference>
<dbReference type="FunFam" id="3.40.50.880:FF:000004">
    <property type="entry name" value="Homoserine O-succinyltransferase"/>
    <property type="match status" value="1"/>
</dbReference>
<dbReference type="Gene3D" id="3.40.50.880">
    <property type="match status" value="1"/>
</dbReference>
<dbReference type="HAMAP" id="MF_00295">
    <property type="entry name" value="MetA_acyltransf"/>
    <property type="match status" value="1"/>
</dbReference>
<dbReference type="InterPro" id="IPR029062">
    <property type="entry name" value="Class_I_gatase-like"/>
</dbReference>
<dbReference type="InterPro" id="IPR005697">
    <property type="entry name" value="HST_MetA"/>
</dbReference>
<dbReference type="InterPro" id="IPR033752">
    <property type="entry name" value="MetA_family"/>
</dbReference>
<dbReference type="NCBIfam" id="TIGR01001">
    <property type="entry name" value="metA"/>
    <property type="match status" value="1"/>
</dbReference>
<dbReference type="PANTHER" id="PTHR20919">
    <property type="entry name" value="HOMOSERINE O-SUCCINYLTRANSFERASE"/>
    <property type="match status" value="1"/>
</dbReference>
<dbReference type="PANTHER" id="PTHR20919:SF0">
    <property type="entry name" value="HOMOSERINE O-SUCCINYLTRANSFERASE"/>
    <property type="match status" value="1"/>
</dbReference>
<dbReference type="Pfam" id="PF04204">
    <property type="entry name" value="HTS"/>
    <property type="match status" value="1"/>
</dbReference>
<dbReference type="PIRSF" id="PIRSF000450">
    <property type="entry name" value="H_ser_succinyltr"/>
    <property type="match status" value="1"/>
</dbReference>
<dbReference type="SUPFAM" id="SSF52317">
    <property type="entry name" value="Class I glutamine amidotransferase-like"/>
    <property type="match status" value="1"/>
</dbReference>
<feature type="chain" id="PRO_1000021824" description="Homoserine O-succinyltransferase">
    <location>
        <begin position="1"/>
        <end position="305"/>
    </location>
</feature>
<feature type="active site" description="Acyl-thioester intermediate" evidence="1">
    <location>
        <position position="142"/>
    </location>
</feature>
<feature type="active site" description="Proton acceptor" evidence="1">
    <location>
        <position position="235"/>
    </location>
</feature>
<feature type="active site" evidence="1">
    <location>
        <position position="237"/>
    </location>
</feature>
<feature type="binding site" evidence="1">
    <location>
        <position position="163"/>
    </location>
    <ligand>
        <name>substrate</name>
    </ligand>
</feature>
<feature type="binding site" evidence="1">
    <location>
        <position position="192"/>
    </location>
    <ligand>
        <name>substrate</name>
    </ligand>
</feature>
<feature type="binding site" evidence="1">
    <location>
        <position position="249"/>
    </location>
    <ligand>
        <name>substrate</name>
    </ligand>
</feature>
<feature type="site" description="Important for acyl-CoA specificity" evidence="1">
    <location>
        <position position="111"/>
    </location>
</feature>
<feature type="site" description="Important for substrate specificity" evidence="1">
    <location>
        <position position="192"/>
    </location>
</feature>
<accession>A1SR71</accession>
<name>METAS_PSYIN</name>
<organism>
    <name type="scientific">Psychromonas ingrahamii (strain DSM 17664 / CCUG 51855 / 37)</name>
    <dbReference type="NCBI Taxonomy" id="357804"/>
    <lineage>
        <taxon>Bacteria</taxon>
        <taxon>Pseudomonadati</taxon>
        <taxon>Pseudomonadota</taxon>
        <taxon>Gammaproteobacteria</taxon>
        <taxon>Alteromonadales</taxon>
        <taxon>Psychromonadaceae</taxon>
        <taxon>Psychromonas</taxon>
    </lineage>
</organism>
<keyword id="KW-0012">Acyltransferase</keyword>
<keyword id="KW-0028">Amino-acid biosynthesis</keyword>
<keyword id="KW-0963">Cytoplasm</keyword>
<keyword id="KW-0486">Methionine biosynthesis</keyword>
<keyword id="KW-1185">Reference proteome</keyword>
<keyword id="KW-0808">Transferase</keyword>
<reference key="1">
    <citation type="journal article" date="2008" name="BMC Genomics">
        <title>Genomics of an extreme psychrophile, Psychromonas ingrahamii.</title>
        <authorList>
            <person name="Riley M."/>
            <person name="Staley J.T."/>
            <person name="Danchin A."/>
            <person name="Wang T.Z."/>
            <person name="Brettin T.S."/>
            <person name="Hauser L.J."/>
            <person name="Land M.L."/>
            <person name="Thompson L.S."/>
        </authorList>
    </citation>
    <scope>NUCLEOTIDE SEQUENCE [LARGE SCALE GENOMIC DNA]</scope>
    <source>
        <strain>DSM 17664 / CCUG 51855 / 37</strain>
    </source>
</reference>
<evidence type="ECO:0000255" key="1">
    <source>
        <dbReference type="HAMAP-Rule" id="MF_00295"/>
    </source>
</evidence>